<name>RPO11_ARCFU</name>
<gene>
    <name evidence="1" type="primary">rpo11</name>
    <name evidence="1" type="synonym">rpoL</name>
    <name type="ordered locus">AF_0207</name>
</gene>
<comment type="function">
    <text evidence="1">DNA-dependent RNA polymerase (RNAP) catalyzes the transcription of DNA into RNA using the four ribonucleoside triphosphates as substrates.</text>
</comment>
<comment type="catalytic activity">
    <reaction evidence="1">
        <text>RNA(n) + a ribonucleoside 5'-triphosphate = RNA(n+1) + diphosphate</text>
        <dbReference type="Rhea" id="RHEA:21248"/>
        <dbReference type="Rhea" id="RHEA-COMP:14527"/>
        <dbReference type="Rhea" id="RHEA-COMP:17342"/>
        <dbReference type="ChEBI" id="CHEBI:33019"/>
        <dbReference type="ChEBI" id="CHEBI:61557"/>
        <dbReference type="ChEBI" id="CHEBI:140395"/>
        <dbReference type="EC" id="2.7.7.6"/>
    </reaction>
</comment>
<comment type="subunit">
    <text evidence="1">Part of the RNA polymerase complex.</text>
</comment>
<comment type="subcellular location">
    <subcellularLocation>
        <location evidence="1">Cytoplasm</location>
    </subcellularLocation>
</comment>
<comment type="similarity">
    <text evidence="1">Belongs to the archaeal Rpo11/eukaryotic RPB11/RPC19 RNA polymerase subunit family.</text>
</comment>
<evidence type="ECO:0000255" key="1">
    <source>
        <dbReference type="HAMAP-Rule" id="MF_00261"/>
    </source>
</evidence>
<protein>
    <recommendedName>
        <fullName evidence="1">DNA-directed RNA polymerase subunit Rpo11</fullName>
        <ecNumber evidence="1">2.7.7.6</ecNumber>
    </recommendedName>
    <alternativeName>
        <fullName evidence="1">DNA-directed RNA polymerase subunit L</fullName>
    </alternativeName>
</protein>
<feature type="chain" id="PRO_0000149322" description="DNA-directed RNA polymerase subunit Rpo11">
    <location>
        <begin position="1"/>
        <end position="86"/>
    </location>
</feature>
<keyword id="KW-0963">Cytoplasm</keyword>
<keyword id="KW-0240">DNA-directed RNA polymerase</keyword>
<keyword id="KW-0548">Nucleotidyltransferase</keyword>
<keyword id="KW-1185">Reference proteome</keyword>
<keyword id="KW-0804">Transcription</keyword>
<keyword id="KW-0808">Transferase</keyword>
<organism>
    <name type="scientific">Archaeoglobus fulgidus (strain ATCC 49558 / DSM 4304 / JCM 9628 / NBRC 100126 / VC-16)</name>
    <dbReference type="NCBI Taxonomy" id="224325"/>
    <lineage>
        <taxon>Archaea</taxon>
        <taxon>Methanobacteriati</taxon>
        <taxon>Methanobacteriota</taxon>
        <taxon>Archaeoglobi</taxon>
        <taxon>Archaeoglobales</taxon>
        <taxon>Archaeoglobaceae</taxon>
        <taxon>Archaeoglobus</taxon>
    </lineage>
</organism>
<sequence>MEVKIIDIGEDYVRLVIKGEGHTYLNLLQHYLVEDEDVIVARYNIPHPLIGEPEIYIKTSGVDPLEAVKRANEKIIAACNTLLEQL</sequence>
<proteinExistence type="inferred from homology"/>
<dbReference type="EC" id="2.7.7.6" evidence="1"/>
<dbReference type="EMBL" id="AE000782">
    <property type="protein sequence ID" value="AAB91026.1"/>
    <property type="molecule type" value="Genomic_DNA"/>
</dbReference>
<dbReference type="PIR" id="G69275">
    <property type="entry name" value="G69275"/>
</dbReference>
<dbReference type="RefSeq" id="WP_010877718.1">
    <property type="nucleotide sequence ID" value="NC_000917.1"/>
</dbReference>
<dbReference type="SMR" id="O30032"/>
<dbReference type="STRING" id="224325.AF_0207"/>
<dbReference type="PaxDb" id="224325-AF_0207"/>
<dbReference type="EnsemblBacteria" id="AAB91026">
    <property type="protein sequence ID" value="AAB91026"/>
    <property type="gene ID" value="AF_0207"/>
</dbReference>
<dbReference type="KEGG" id="afu:AF_0207"/>
<dbReference type="eggNOG" id="arCOG04111">
    <property type="taxonomic scope" value="Archaea"/>
</dbReference>
<dbReference type="HOGENOM" id="CLU_090381_5_3_2"/>
<dbReference type="OrthoDB" id="24205at2157"/>
<dbReference type="PhylomeDB" id="O30032"/>
<dbReference type="Proteomes" id="UP000002199">
    <property type="component" value="Chromosome"/>
</dbReference>
<dbReference type="GO" id="GO:0005737">
    <property type="term" value="C:cytoplasm"/>
    <property type="evidence" value="ECO:0007669"/>
    <property type="project" value="UniProtKB-SubCell"/>
</dbReference>
<dbReference type="GO" id="GO:0000428">
    <property type="term" value="C:DNA-directed RNA polymerase complex"/>
    <property type="evidence" value="ECO:0007669"/>
    <property type="project" value="UniProtKB-KW"/>
</dbReference>
<dbReference type="GO" id="GO:0003677">
    <property type="term" value="F:DNA binding"/>
    <property type="evidence" value="ECO:0007669"/>
    <property type="project" value="InterPro"/>
</dbReference>
<dbReference type="GO" id="GO:0003899">
    <property type="term" value="F:DNA-directed RNA polymerase activity"/>
    <property type="evidence" value="ECO:0007669"/>
    <property type="project" value="UniProtKB-UniRule"/>
</dbReference>
<dbReference type="GO" id="GO:0046983">
    <property type="term" value="F:protein dimerization activity"/>
    <property type="evidence" value="ECO:0007669"/>
    <property type="project" value="InterPro"/>
</dbReference>
<dbReference type="GO" id="GO:0006351">
    <property type="term" value="P:DNA-templated transcription"/>
    <property type="evidence" value="ECO:0007669"/>
    <property type="project" value="UniProtKB-UniRule"/>
</dbReference>
<dbReference type="CDD" id="cd06927">
    <property type="entry name" value="RNAP_L"/>
    <property type="match status" value="1"/>
</dbReference>
<dbReference type="Gene3D" id="3.30.1360.10">
    <property type="entry name" value="RNA polymerase, RBP11-like subunit"/>
    <property type="match status" value="1"/>
</dbReference>
<dbReference type="HAMAP" id="MF_00261">
    <property type="entry name" value="RNApol_arch_Rpo11"/>
    <property type="match status" value="1"/>
</dbReference>
<dbReference type="InterPro" id="IPR036603">
    <property type="entry name" value="RBP11-like"/>
</dbReference>
<dbReference type="InterPro" id="IPR009025">
    <property type="entry name" value="RBP11-like_dimer"/>
</dbReference>
<dbReference type="InterPro" id="IPR008193">
    <property type="entry name" value="RNA_pol_Rpb11_13-16kDa_CS"/>
</dbReference>
<dbReference type="InterPro" id="IPR022905">
    <property type="entry name" value="Rpo11-like"/>
</dbReference>
<dbReference type="PANTHER" id="PTHR13946">
    <property type="entry name" value="DNA-DIRECTED RNA POLYMERASE I,II,III"/>
    <property type="match status" value="1"/>
</dbReference>
<dbReference type="PANTHER" id="PTHR13946:SF28">
    <property type="entry name" value="DNA-DIRECTED RNA POLYMERASES I AND III SUBUNIT RPAC2"/>
    <property type="match status" value="1"/>
</dbReference>
<dbReference type="Pfam" id="PF13656">
    <property type="entry name" value="RNA_pol_L_2"/>
    <property type="match status" value="1"/>
</dbReference>
<dbReference type="SUPFAM" id="SSF55257">
    <property type="entry name" value="RBP11-like subunits of RNA polymerase"/>
    <property type="match status" value="1"/>
</dbReference>
<dbReference type="PROSITE" id="PS01154">
    <property type="entry name" value="RNA_POL_L_13KD"/>
    <property type="match status" value="1"/>
</dbReference>
<reference key="1">
    <citation type="journal article" date="1997" name="Nature">
        <title>The complete genome sequence of the hyperthermophilic, sulphate-reducing archaeon Archaeoglobus fulgidus.</title>
        <authorList>
            <person name="Klenk H.-P."/>
            <person name="Clayton R.A."/>
            <person name="Tomb J.-F."/>
            <person name="White O."/>
            <person name="Nelson K.E."/>
            <person name="Ketchum K.A."/>
            <person name="Dodson R.J."/>
            <person name="Gwinn M.L."/>
            <person name="Hickey E.K."/>
            <person name="Peterson J.D."/>
            <person name="Richardson D.L."/>
            <person name="Kerlavage A.R."/>
            <person name="Graham D.E."/>
            <person name="Kyrpides N.C."/>
            <person name="Fleischmann R.D."/>
            <person name="Quackenbush J."/>
            <person name="Lee N.H."/>
            <person name="Sutton G.G."/>
            <person name="Gill S.R."/>
            <person name="Kirkness E.F."/>
            <person name="Dougherty B.A."/>
            <person name="McKenney K."/>
            <person name="Adams M.D."/>
            <person name="Loftus B.J."/>
            <person name="Peterson S.N."/>
            <person name="Reich C.I."/>
            <person name="McNeil L.K."/>
            <person name="Badger J.H."/>
            <person name="Glodek A."/>
            <person name="Zhou L."/>
            <person name="Overbeek R."/>
            <person name="Gocayne J.D."/>
            <person name="Weidman J.F."/>
            <person name="McDonald L.A."/>
            <person name="Utterback T.R."/>
            <person name="Cotton M.D."/>
            <person name="Spriggs T."/>
            <person name="Artiach P."/>
            <person name="Kaine B.P."/>
            <person name="Sykes S.M."/>
            <person name="Sadow P.W."/>
            <person name="D'Andrea K.P."/>
            <person name="Bowman C."/>
            <person name="Fujii C."/>
            <person name="Garland S.A."/>
            <person name="Mason T.M."/>
            <person name="Olsen G.J."/>
            <person name="Fraser C.M."/>
            <person name="Smith H.O."/>
            <person name="Woese C.R."/>
            <person name="Venter J.C."/>
        </authorList>
    </citation>
    <scope>NUCLEOTIDE SEQUENCE [LARGE SCALE GENOMIC DNA]</scope>
    <source>
        <strain>ATCC 49558 / DSM 4304 / JCM 9628 / NBRC 100126 / VC-16</strain>
    </source>
</reference>
<accession>O30032</accession>